<feature type="chain" id="PRO_1000056927" description="Cytochrome b559 subunit alpha">
    <location>
        <begin position="1"/>
        <end position="84"/>
    </location>
</feature>
<feature type="transmembrane region" description="Helical" evidence="1">
    <location>
        <begin position="24"/>
        <end position="38"/>
    </location>
</feature>
<feature type="binding site" description="axial binding residue" evidence="1">
    <location>
        <position position="26"/>
    </location>
    <ligand>
        <name>heme</name>
        <dbReference type="ChEBI" id="CHEBI:30413"/>
        <note>ligand shared with beta subunit</note>
    </ligand>
    <ligandPart>
        <name>Fe</name>
        <dbReference type="ChEBI" id="CHEBI:18248"/>
    </ligandPart>
</feature>
<organism>
    <name type="scientific">Prochlorococcus marinus (strain MIT 9301)</name>
    <dbReference type="NCBI Taxonomy" id="167546"/>
    <lineage>
        <taxon>Bacteria</taxon>
        <taxon>Bacillati</taxon>
        <taxon>Cyanobacteriota</taxon>
        <taxon>Cyanophyceae</taxon>
        <taxon>Synechococcales</taxon>
        <taxon>Prochlorococcaceae</taxon>
        <taxon>Prochlorococcus</taxon>
    </lineage>
</organism>
<reference key="1">
    <citation type="journal article" date="2007" name="PLoS Genet.">
        <title>Patterns and implications of gene gain and loss in the evolution of Prochlorococcus.</title>
        <authorList>
            <person name="Kettler G.C."/>
            <person name="Martiny A.C."/>
            <person name="Huang K."/>
            <person name="Zucker J."/>
            <person name="Coleman M.L."/>
            <person name="Rodrigue S."/>
            <person name="Chen F."/>
            <person name="Lapidus A."/>
            <person name="Ferriera S."/>
            <person name="Johnson J."/>
            <person name="Steglich C."/>
            <person name="Church G.M."/>
            <person name="Richardson P."/>
            <person name="Chisholm S.W."/>
        </authorList>
    </citation>
    <scope>NUCLEOTIDE SEQUENCE [LARGE SCALE GENOMIC DNA]</scope>
    <source>
        <strain>MIT 9301</strain>
    </source>
</reference>
<accession>A3PB19</accession>
<protein>
    <recommendedName>
        <fullName evidence="1">Cytochrome b559 subunit alpha</fullName>
    </recommendedName>
    <alternativeName>
        <fullName evidence="1">PSII reaction center subunit V</fullName>
    </alternativeName>
</protein>
<proteinExistence type="inferred from homology"/>
<gene>
    <name evidence="1" type="primary">psbE</name>
    <name type="ordered locus">P9301_03211</name>
</gene>
<comment type="function">
    <text evidence="1">This b-type cytochrome is tightly associated with the reaction center of photosystem II (PSII). PSII is a light-driven water:plastoquinone oxidoreductase that uses light energy to abstract electrons from H(2)O, generating O(2) and a proton gradient subsequently used for ATP formation. It consists of a core antenna complex that captures photons, and an electron transfer chain that converts photonic excitation into a charge separation.</text>
</comment>
<comment type="cofactor">
    <cofactor evidence="1">
        <name>heme b</name>
        <dbReference type="ChEBI" id="CHEBI:60344"/>
    </cofactor>
    <text evidence="1">With its partner (PsbF) binds heme. PSII binds additional chlorophylls, carotenoids and specific lipids.</text>
</comment>
<comment type="subunit">
    <text evidence="2">Heterodimer of an alpha subunit and a beta subunit. PSII is composed of 1 copy each of membrane proteins PsbA, PsbB, PsbC, PsbD, PsbE, PsbF, PsbH, PsbI, PsbJ, PsbK, PsbL, PsbM, PsbT, PsbX, PsbY, Psb30/Ycf12, peripheral proteins PsbO, CyanoQ (PsbQ), PsbU, PsbV and a large number of cofactors. It forms dimeric complexes.</text>
</comment>
<comment type="subcellular location">
    <subcellularLocation>
        <location evidence="1">Cellular thylakoid membrane</location>
        <topology evidence="1">Single-pass membrane protein</topology>
    </subcellularLocation>
</comment>
<comment type="similarity">
    <text evidence="1">Belongs to the PsbE/PsbF family.</text>
</comment>
<keyword id="KW-0249">Electron transport</keyword>
<keyword id="KW-0349">Heme</keyword>
<keyword id="KW-0408">Iron</keyword>
<keyword id="KW-0472">Membrane</keyword>
<keyword id="KW-0479">Metal-binding</keyword>
<keyword id="KW-0602">Photosynthesis</keyword>
<keyword id="KW-0604">Photosystem II</keyword>
<keyword id="KW-1185">Reference proteome</keyword>
<keyword id="KW-0793">Thylakoid</keyword>
<keyword id="KW-0812">Transmembrane</keyword>
<keyword id="KW-1133">Transmembrane helix</keyword>
<keyword id="KW-0813">Transport</keyword>
<evidence type="ECO:0000255" key="1">
    <source>
        <dbReference type="HAMAP-Rule" id="MF_00642"/>
    </source>
</evidence>
<evidence type="ECO:0000305" key="2"/>
<name>PSBE_PROM0</name>
<dbReference type="EMBL" id="CP000576">
    <property type="protein sequence ID" value="ABO16944.1"/>
    <property type="molecule type" value="Genomic_DNA"/>
</dbReference>
<dbReference type="SMR" id="A3PB19"/>
<dbReference type="STRING" id="167546.P9301_03211"/>
<dbReference type="KEGG" id="pmg:P9301_03211"/>
<dbReference type="eggNOG" id="ENOG5032RR6">
    <property type="taxonomic scope" value="Bacteria"/>
</dbReference>
<dbReference type="HOGENOM" id="CLU_194095_0_0_3"/>
<dbReference type="Proteomes" id="UP000001430">
    <property type="component" value="Chromosome"/>
</dbReference>
<dbReference type="GO" id="GO:0009523">
    <property type="term" value="C:photosystem II"/>
    <property type="evidence" value="ECO:0007669"/>
    <property type="project" value="UniProtKB-KW"/>
</dbReference>
<dbReference type="GO" id="GO:0031676">
    <property type="term" value="C:plasma membrane-derived thylakoid membrane"/>
    <property type="evidence" value="ECO:0007669"/>
    <property type="project" value="UniProtKB-SubCell"/>
</dbReference>
<dbReference type="GO" id="GO:0009055">
    <property type="term" value="F:electron transfer activity"/>
    <property type="evidence" value="ECO:0007669"/>
    <property type="project" value="UniProtKB-UniRule"/>
</dbReference>
<dbReference type="GO" id="GO:0020037">
    <property type="term" value="F:heme binding"/>
    <property type="evidence" value="ECO:0007669"/>
    <property type="project" value="InterPro"/>
</dbReference>
<dbReference type="GO" id="GO:0005506">
    <property type="term" value="F:iron ion binding"/>
    <property type="evidence" value="ECO:0007669"/>
    <property type="project" value="UniProtKB-UniRule"/>
</dbReference>
<dbReference type="GO" id="GO:0009767">
    <property type="term" value="P:photosynthetic electron transport chain"/>
    <property type="evidence" value="ECO:0007669"/>
    <property type="project" value="InterPro"/>
</dbReference>
<dbReference type="Gene3D" id="1.20.5.860">
    <property type="entry name" value="Photosystem II cytochrome b559, alpha subunit"/>
    <property type="match status" value="1"/>
</dbReference>
<dbReference type="HAMAP" id="MF_00642">
    <property type="entry name" value="PSII_PsbE"/>
    <property type="match status" value="1"/>
</dbReference>
<dbReference type="InterPro" id="IPR006217">
    <property type="entry name" value="PSII_cyt_b559_asu"/>
</dbReference>
<dbReference type="InterPro" id="IPR037025">
    <property type="entry name" value="PSII_cyt_b559_asu_sf"/>
</dbReference>
<dbReference type="InterPro" id="IPR013081">
    <property type="entry name" value="PSII_cyt_b559_N"/>
</dbReference>
<dbReference type="InterPro" id="IPR013082">
    <property type="entry name" value="PSII_cytb559_asu_lum"/>
</dbReference>
<dbReference type="NCBIfam" id="TIGR01332">
    <property type="entry name" value="cyt_b559_alpha"/>
    <property type="match status" value="1"/>
</dbReference>
<dbReference type="PANTHER" id="PTHR33391">
    <property type="entry name" value="CYTOCHROME B559 SUBUNIT BETA-RELATED"/>
    <property type="match status" value="1"/>
</dbReference>
<dbReference type="PANTHER" id="PTHR33391:SF9">
    <property type="entry name" value="CYTOCHROME B559 SUBUNIT BETA-RELATED"/>
    <property type="match status" value="1"/>
</dbReference>
<dbReference type="Pfam" id="PF00283">
    <property type="entry name" value="Cytochrom_B559"/>
    <property type="match status" value="1"/>
</dbReference>
<dbReference type="Pfam" id="PF00284">
    <property type="entry name" value="Cytochrom_B559a"/>
    <property type="match status" value="1"/>
</dbReference>
<dbReference type="PIRSF" id="PIRSF000036">
    <property type="entry name" value="PsbE"/>
    <property type="match status" value="1"/>
</dbReference>
<dbReference type="SUPFAM" id="SSF161045">
    <property type="entry name" value="Cytochrome b559 subunits"/>
    <property type="match status" value="1"/>
</dbReference>
<sequence length="84" mass="9457">MIMAAGSTGERPFFEIITSIRYWIIHAVTLPAIFIAGFLFVYTGLAYDAFGTPRPDSYFQSSESKAPVVTQRYEAKSQLDLRTK</sequence>